<accession>Q84JL7</accession>
<accession>Q9FL85</accession>
<feature type="chain" id="PRO_0000457181" description="Alpha/beta hydrolase domain-containing protein VTE7">
    <location>
        <begin position="1"/>
        <end position="330"/>
    </location>
</feature>
<feature type="domain" description="AB hydrolase-1" evidence="2">
    <location>
        <begin position="84"/>
        <end position="315"/>
    </location>
</feature>
<feature type="active site" description="Nucleophile" evidence="1">
    <location>
        <position position="157"/>
    </location>
</feature>
<feature type="active site" description="Charge relay system" evidence="1">
    <location>
        <position position="279"/>
    </location>
</feature>
<feature type="active site" description="Charge relay system" evidence="1">
    <location>
        <position position="307"/>
    </location>
</feature>
<sequence length="330" mass="36849">MMGSLKIISPPPPATRFRQRVTANGDGFPTFLPKEIQNIKDPFARALAQRIVRIPVPLQMGNFRGSVMSSCIKPLVQLHDKSPVVLLHCFDSSCLEWRRTYPLLEQACLETWAIDVLGWGFSDLEKLPPCDAASKRHHLFELWKTYIKRPMILVGPSLGATVAVDFTATYPEAVDKLVLINANAYSEGTGRLKELPKSIAYAGVKLLKSFPLRLLANVLAFCSSPLSENIDWTNIGRLHCQMPWWEDAMVDFMISGGYNVASHIKHIDHKTLVVCSENDQIVSNQLSVKLLCELANAVLREVPDSGHLPHVENPKHIVKLISDFASGKLY</sequence>
<dbReference type="EC" id="3.1.1.-" evidence="3"/>
<dbReference type="EMBL" id="AB010694">
    <property type="protein sequence ID" value="BAB09377.1"/>
    <property type="status" value="ALT_SEQ"/>
    <property type="molecule type" value="Genomic_DNA"/>
</dbReference>
<dbReference type="EMBL" id="CP002688">
    <property type="protein sequence ID" value="AED94409.1"/>
    <property type="molecule type" value="Genomic_DNA"/>
</dbReference>
<dbReference type="EMBL" id="BT004189">
    <property type="protein sequence ID" value="AAO42208.1"/>
    <property type="molecule type" value="mRNA"/>
</dbReference>
<dbReference type="EMBL" id="BT005407">
    <property type="protein sequence ID" value="AAO63827.1"/>
    <property type="molecule type" value="mRNA"/>
</dbReference>
<dbReference type="RefSeq" id="NP_198738.2">
    <property type="nucleotide sequence ID" value="NM_123284.4"/>
</dbReference>
<dbReference type="SMR" id="Q84JL7"/>
<dbReference type="STRING" id="3702.Q84JL7"/>
<dbReference type="ESTHER" id="arath-AT5G39220">
    <property type="family name" value="6_AlphaBeta_hydrolase"/>
</dbReference>
<dbReference type="MEROPS" id="S33.A16"/>
<dbReference type="PaxDb" id="3702-AT5G39220.1"/>
<dbReference type="ProteomicsDB" id="189799"/>
<dbReference type="EnsemblPlants" id="AT5G39220.1">
    <property type="protein sequence ID" value="AT5G39220.1"/>
    <property type="gene ID" value="AT5G39220"/>
</dbReference>
<dbReference type="GeneID" id="833918"/>
<dbReference type="Gramene" id="AT5G39220.1">
    <property type="protein sequence ID" value="AT5G39220.1"/>
    <property type="gene ID" value="AT5G39220"/>
</dbReference>
<dbReference type="KEGG" id="ath:AT5G39220"/>
<dbReference type="Araport" id="AT5G39220"/>
<dbReference type="TAIR" id="AT5G39220"/>
<dbReference type="eggNOG" id="KOG1454">
    <property type="taxonomic scope" value="Eukaryota"/>
</dbReference>
<dbReference type="HOGENOM" id="CLU_020336_13_6_1"/>
<dbReference type="InParanoid" id="Q84JL7"/>
<dbReference type="OMA" id="SSCIKPI"/>
<dbReference type="PRO" id="PR:Q84JL7"/>
<dbReference type="Proteomes" id="UP000006548">
    <property type="component" value="Chromosome 5"/>
</dbReference>
<dbReference type="ExpressionAtlas" id="Q84JL7">
    <property type="expression patterns" value="baseline and differential"/>
</dbReference>
<dbReference type="GO" id="GO:0009941">
    <property type="term" value="C:chloroplast envelope"/>
    <property type="evidence" value="ECO:0007669"/>
    <property type="project" value="UniProtKB-SubCell"/>
</dbReference>
<dbReference type="GO" id="GO:0016787">
    <property type="term" value="F:hydrolase activity"/>
    <property type="evidence" value="ECO:0007669"/>
    <property type="project" value="UniProtKB-KW"/>
</dbReference>
<dbReference type="Gene3D" id="3.40.50.1820">
    <property type="entry name" value="alpha/beta hydrolase"/>
    <property type="match status" value="1"/>
</dbReference>
<dbReference type="InterPro" id="IPR000073">
    <property type="entry name" value="AB_hydrolase_1"/>
</dbReference>
<dbReference type="InterPro" id="IPR029058">
    <property type="entry name" value="AB_hydrolase_fold"/>
</dbReference>
<dbReference type="PANTHER" id="PTHR43689:SF37">
    <property type="entry name" value="ALPHA_BETA HYDROLASE DOMAIN-CONTAINING PROTEIN VTE7"/>
    <property type="match status" value="1"/>
</dbReference>
<dbReference type="PANTHER" id="PTHR43689">
    <property type="entry name" value="HYDROLASE"/>
    <property type="match status" value="1"/>
</dbReference>
<dbReference type="Pfam" id="PF12697">
    <property type="entry name" value="Abhydrolase_6"/>
    <property type="match status" value="1"/>
</dbReference>
<dbReference type="PRINTS" id="PR00111">
    <property type="entry name" value="ABHYDROLASE"/>
</dbReference>
<dbReference type="SUPFAM" id="SSF53474">
    <property type="entry name" value="alpha/beta-Hydrolases"/>
    <property type="match status" value="1"/>
</dbReference>
<protein>
    <recommendedName>
        <fullName evidence="5">Alpha/beta hydrolase domain-containing protein VTE7</fullName>
        <ecNumber evidence="3">3.1.1.-</ecNumber>
    </recommendedName>
    <alternativeName>
        <fullName evidence="5">Protein VITAMIN E DEFICIENT 7</fullName>
        <shortName evidence="4">AtVTE7</shortName>
    </alternativeName>
</protein>
<name>VTE7_ARATH</name>
<organism>
    <name type="scientific">Arabidopsis thaliana</name>
    <name type="common">Mouse-ear cress</name>
    <dbReference type="NCBI Taxonomy" id="3702"/>
    <lineage>
        <taxon>Eukaryota</taxon>
        <taxon>Viridiplantae</taxon>
        <taxon>Streptophyta</taxon>
        <taxon>Embryophyta</taxon>
        <taxon>Tracheophyta</taxon>
        <taxon>Spermatophyta</taxon>
        <taxon>Magnoliopsida</taxon>
        <taxon>eudicotyledons</taxon>
        <taxon>Gunneridae</taxon>
        <taxon>Pentapetalae</taxon>
        <taxon>rosids</taxon>
        <taxon>malvids</taxon>
        <taxon>Brassicales</taxon>
        <taxon>Brassicaceae</taxon>
        <taxon>Camelineae</taxon>
        <taxon>Arabidopsis</taxon>
    </lineage>
</organism>
<reference key="1">
    <citation type="journal article" date="1998" name="DNA Res.">
        <title>Structural analysis of Arabidopsis thaliana chromosome 5. V. Sequence features of the regions of 1,381,565 bp covered by twenty one physically assigned P1 and TAC clones.</title>
        <authorList>
            <person name="Kaneko T."/>
            <person name="Kotani H."/>
            <person name="Nakamura Y."/>
            <person name="Sato S."/>
            <person name="Asamizu E."/>
            <person name="Miyajima N."/>
            <person name="Tabata S."/>
        </authorList>
    </citation>
    <scope>NUCLEOTIDE SEQUENCE [LARGE SCALE GENOMIC DNA]</scope>
    <source>
        <strain>cv. Columbia</strain>
    </source>
</reference>
<reference key="2">
    <citation type="journal article" date="2017" name="Plant J.">
        <title>Araport11: a complete reannotation of the Arabidopsis thaliana reference genome.</title>
        <authorList>
            <person name="Cheng C.Y."/>
            <person name="Krishnakumar V."/>
            <person name="Chan A.P."/>
            <person name="Thibaud-Nissen F."/>
            <person name="Schobel S."/>
            <person name="Town C.D."/>
        </authorList>
    </citation>
    <scope>GENOME REANNOTATION</scope>
    <source>
        <strain>cv. Columbia</strain>
    </source>
</reference>
<reference key="3">
    <citation type="journal article" date="2003" name="Science">
        <title>Empirical analysis of transcriptional activity in the Arabidopsis genome.</title>
        <authorList>
            <person name="Yamada K."/>
            <person name="Lim J."/>
            <person name="Dale J.M."/>
            <person name="Chen H."/>
            <person name="Shinn P."/>
            <person name="Palm C.J."/>
            <person name="Southwick A.M."/>
            <person name="Wu H.C."/>
            <person name="Kim C.J."/>
            <person name="Nguyen M."/>
            <person name="Pham P.K."/>
            <person name="Cheuk R.F."/>
            <person name="Karlin-Newmann G."/>
            <person name="Liu S.X."/>
            <person name="Lam B."/>
            <person name="Sakano H."/>
            <person name="Wu T."/>
            <person name="Yu G."/>
            <person name="Miranda M."/>
            <person name="Quach H.L."/>
            <person name="Tripp M."/>
            <person name="Chang C.H."/>
            <person name="Lee J.M."/>
            <person name="Toriumi M.J."/>
            <person name="Chan M.M."/>
            <person name="Tang C.C."/>
            <person name="Onodera C.S."/>
            <person name="Deng J.M."/>
            <person name="Akiyama K."/>
            <person name="Ansari Y."/>
            <person name="Arakawa T."/>
            <person name="Banh J."/>
            <person name="Banno F."/>
            <person name="Bowser L."/>
            <person name="Brooks S.Y."/>
            <person name="Carninci P."/>
            <person name="Chao Q."/>
            <person name="Choy N."/>
            <person name="Enju A."/>
            <person name="Goldsmith A.D."/>
            <person name="Gurjal M."/>
            <person name="Hansen N.F."/>
            <person name="Hayashizaki Y."/>
            <person name="Johnson-Hopson C."/>
            <person name="Hsuan V.W."/>
            <person name="Iida K."/>
            <person name="Karnes M."/>
            <person name="Khan S."/>
            <person name="Koesema E."/>
            <person name="Ishida J."/>
            <person name="Jiang P.X."/>
            <person name="Jones T."/>
            <person name="Kawai J."/>
            <person name="Kamiya A."/>
            <person name="Meyers C."/>
            <person name="Nakajima M."/>
            <person name="Narusaka M."/>
            <person name="Seki M."/>
            <person name="Sakurai T."/>
            <person name="Satou M."/>
            <person name="Tamse R."/>
            <person name="Vaysberg M."/>
            <person name="Wallender E.K."/>
            <person name="Wong C."/>
            <person name="Yamamura Y."/>
            <person name="Yuan S."/>
            <person name="Shinozaki K."/>
            <person name="Davis R.W."/>
            <person name="Theologis A."/>
            <person name="Ecker J.R."/>
        </authorList>
    </citation>
    <scope>NUCLEOTIDE SEQUENCE [LARGE SCALE MRNA]</scope>
    <source>
        <strain>cv. Columbia</strain>
    </source>
</reference>
<reference key="4">
    <citation type="journal article" date="2022" name="Proc. Natl. Acad. Sci. U.S.A.">
        <title>Genome-wide association identifies a missing hydrolase for tocopherol synthesis in plants.</title>
        <authorList>
            <person name="Albert E."/>
            <person name="Kim S."/>
            <person name="Magallanes-Lundback M."/>
            <person name="Bao Y."/>
            <person name="Deason N."/>
            <person name="Danilo B."/>
            <person name="Wu D."/>
            <person name="Li X."/>
            <person name="Wood J.C."/>
            <person name="Bornowski N."/>
            <person name="Gore M.A."/>
            <person name="Buell C.R."/>
            <person name="DellaPenna D."/>
        </authorList>
    </citation>
    <scope>FUNCTION</scope>
    <scope>CATALYTIC ACTIVITY</scope>
    <scope>SUBCELLULAR LOCATION</scope>
    <scope>DISRUPTION PHENOTYPE</scope>
</reference>
<gene>
    <name evidence="4" type="primary">VTE7</name>
    <name evidence="6" type="ordered locus">At5g39220</name>
    <name evidence="7" type="ORF">K3K3.12</name>
</gene>
<proteinExistence type="evidence at protein level"/>
<evidence type="ECO:0000250" key="1">
    <source>
        <dbReference type="UniProtKB" id="Q99685"/>
    </source>
</evidence>
<evidence type="ECO:0000255" key="2"/>
<evidence type="ECO:0000269" key="3">
    <source>
    </source>
</evidence>
<evidence type="ECO:0000303" key="4">
    <source>
    </source>
</evidence>
<evidence type="ECO:0000305" key="5"/>
<evidence type="ECO:0000312" key="6">
    <source>
        <dbReference type="Araport" id="AT5G39220"/>
    </source>
</evidence>
<evidence type="ECO:0000312" key="7">
    <source>
        <dbReference type="EMBL" id="BAB09377.1"/>
    </source>
</evidence>
<keyword id="KW-0150">Chloroplast</keyword>
<keyword id="KW-0378">Hydrolase</keyword>
<keyword id="KW-0934">Plastid</keyword>
<keyword id="KW-1185">Reference proteome</keyword>
<comment type="function">
    <text evidence="3">Hydrolase involved in tocopherol (vitamin E) biosynthesis (PubMed:35639691). Releases prenyl alcohols from chlorophyll biosynthetic intermediates, which are then converted to the corresponding diphosphates for tocopherol biosynthesis (PubMed:35639691). Provides most of the phytol from chlorophyll for tocopherol biosynthesis in seeds (PubMed:35639691).</text>
</comment>
<comment type="subcellular location">
    <subcellularLocation>
        <location evidence="3">Plastid</location>
        <location evidence="3">Chloroplast envelope</location>
    </subcellularLocation>
</comment>
<comment type="disruption phenotype">
    <text evidence="3">Stong decrease of tocopherol (vitamin E) content in seeds.</text>
</comment>
<comment type="similarity">
    <text evidence="5">Belongs to the AB hydrolase superfamily.</text>
</comment>
<comment type="sequence caution" evidence="5">
    <conflict type="erroneous gene model prediction">
        <sequence resource="EMBL-CDS" id="BAB09377"/>
    </conflict>
</comment>